<accession>O57424</accession>
<feature type="chain" id="PRO_0000197176" description="Hyaluronan synthase 2">
    <location>
        <begin position="1"/>
        <end position="552"/>
    </location>
</feature>
<feature type="topological domain" description="Cytoplasmic" evidence="3">
    <location>
        <begin position="1"/>
        <end position="11"/>
    </location>
</feature>
<feature type="transmembrane region" description="Helical; Name=1" evidence="3">
    <location>
        <begin position="12"/>
        <end position="32"/>
    </location>
</feature>
<feature type="topological domain" description="Extracellular" evidence="3">
    <location>
        <begin position="33"/>
        <end position="45"/>
    </location>
</feature>
<feature type="transmembrane region" description="Helical; Name=2" evidence="3">
    <location>
        <begin position="46"/>
        <end position="66"/>
    </location>
</feature>
<feature type="topological domain" description="Cytoplasmic" evidence="3">
    <location>
        <begin position="67"/>
        <end position="374"/>
    </location>
</feature>
<feature type="transmembrane region" description="Helical; Name=3" evidence="3">
    <location>
        <begin position="375"/>
        <end position="395"/>
    </location>
</feature>
<feature type="topological domain" description="Extracellular" evidence="3">
    <location>
        <begin position="396"/>
        <end position="402"/>
    </location>
</feature>
<feature type="transmembrane region" description="Helical; Name=4" evidence="3">
    <location>
        <begin position="403"/>
        <end position="423"/>
    </location>
</feature>
<feature type="topological domain" description="Cytoplasmic" evidence="3">
    <location>
        <begin position="424"/>
        <end position="429"/>
    </location>
</feature>
<feature type="transmembrane region" description="Helical; Name=5" evidence="3">
    <location>
        <begin position="430"/>
        <end position="450"/>
    </location>
</feature>
<feature type="topological domain" description="Extracellular" evidence="3">
    <location>
        <begin position="451"/>
        <end position="475"/>
    </location>
</feature>
<feature type="transmembrane region" description="Helical; Name=6" evidence="3">
    <location>
        <begin position="476"/>
        <end position="496"/>
    </location>
</feature>
<feature type="topological domain" description="Cytoplasmic" evidence="3">
    <location>
        <begin position="497"/>
        <end position="510"/>
    </location>
</feature>
<feature type="transmembrane region" description="Helical; Name=7" evidence="3">
    <location>
        <begin position="511"/>
        <end position="531"/>
    </location>
</feature>
<feature type="topological domain" description="Extracellular" evidence="3">
    <location>
        <begin position="532"/>
        <end position="552"/>
    </location>
</feature>
<comment type="function">
    <text evidence="1 2">Catalyzes the addition of GlcNAc or GlcUA monosaccharides to the nascent hyaluronan polymer. Therefore, it is essential to hyaluronan synthesis a major component of most extracellular matrices that has a structural role in tissues architectures and regulates cell adhesion, migration and differentiation (By similarity). This is one of three isoenzymes responsible for cellular hyaluronan synthesis and it is particularly responsible for the synthesis of high molecular mass hyaluronan (By similarity).</text>
</comment>
<comment type="catalytic activity">
    <reaction evidence="2">
        <text>[hyaluronan](n) + UDP-N-acetyl-alpha-D-glucosamine = N-acetyl-beta-D-glucosaminyl-(1-&gt;4)-[hyaluronan](n) + UDP + H(+)</text>
        <dbReference type="Rhea" id="RHEA:20465"/>
        <dbReference type="Rhea" id="RHEA-COMP:12583"/>
        <dbReference type="Rhea" id="RHEA-COMP:12585"/>
        <dbReference type="ChEBI" id="CHEBI:15378"/>
        <dbReference type="ChEBI" id="CHEBI:57705"/>
        <dbReference type="ChEBI" id="CHEBI:58223"/>
        <dbReference type="ChEBI" id="CHEBI:132153"/>
        <dbReference type="ChEBI" id="CHEBI:132154"/>
        <dbReference type="EC" id="2.4.1.212"/>
    </reaction>
    <physiologicalReaction direction="left-to-right" evidence="2">
        <dbReference type="Rhea" id="RHEA:20466"/>
    </physiologicalReaction>
</comment>
<comment type="catalytic activity">
    <reaction evidence="2">
        <text>N-acetyl-beta-D-glucosaminyl-(1-&gt;4)-[hyaluronan](n) + UDP-alpha-D-glucuronate = [hyaluronan](n+1) + UDP + H(+)</text>
        <dbReference type="Rhea" id="RHEA:12528"/>
        <dbReference type="Rhea" id="RHEA-COMP:12585"/>
        <dbReference type="Rhea" id="RHEA-COMP:12587"/>
        <dbReference type="ChEBI" id="CHEBI:15378"/>
        <dbReference type="ChEBI" id="CHEBI:58052"/>
        <dbReference type="ChEBI" id="CHEBI:58223"/>
        <dbReference type="ChEBI" id="CHEBI:132153"/>
        <dbReference type="ChEBI" id="CHEBI:132154"/>
        <dbReference type="EC" id="2.4.1.212"/>
    </reaction>
    <physiologicalReaction direction="left-to-right" evidence="2">
        <dbReference type="Rhea" id="RHEA:12529"/>
    </physiologicalReaction>
</comment>
<comment type="cofactor">
    <cofactor>
        <name>Mg(2+)</name>
        <dbReference type="ChEBI" id="CHEBI:18420"/>
    </cofactor>
</comment>
<comment type="pathway">
    <text evidence="2">Glycan biosynthesis; hyaluronan biosynthesis.</text>
</comment>
<comment type="subunit">
    <text evidence="2">Homodimer; dimerization promotes enzymatic activity.</text>
</comment>
<comment type="subcellular location">
    <subcellularLocation>
        <location evidence="2">Cell membrane</location>
        <topology evidence="3">Multi-pass membrane protein</topology>
    </subcellularLocation>
    <subcellularLocation>
        <location evidence="2">Endoplasmic reticulum membrane</location>
        <topology evidence="3">Multi-pass membrane protein</topology>
    </subcellularLocation>
    <subcellularLocation>
        <location evidence="2">Vesicle</location>
    </subcellularLocation>
    <subcellularLocation>
        <location evidence="2">Golgi apparatus membrane</location>
        <topology evidence="3">Multi-pass membrane protein</topology>
    </subcellularLocation>
    <subcellularLocation>
        <location evidence="2">Lysosome</location>
    </subcellularLocation>
    <text evidence="2">Travels from endoplasmic reticulum (ER), Golgi to plasma membrane and either back to endosomes and lysosomes, or out into extracellular vesicles. Post-translational modifications control HAS2 trafficking.</text>
</comment>
<comment type="similarity">
    <text evidence="4">Belongs to the NodC/HAS family.</text>
</comment>
<reference key="1">
    <citation type="submission" date="1998-11" db="EMBL/GenBank/DDBJ databases">
        <title>Gallus gallus hyaluronan synthase 2 (HAS2) gene.</title>
        <authorList>
            <person name="Huang L."/>
            <person name="Toole B.P."/>
        </authorList>
    </citation>
    <scope>NUCLEOTIDE SEQUENCE [MRNA]</scope>
</reference>
<reference key="2">
    <citation type="journal article" date="1998" name="J. Biol. Chem.">
        <title>Characterization and molecular evolution of a vertebrate hyaluronan synthase gene family.</title>
        <authorList>
            <person name="Spicer A.P."/>
            <person name="McDonald J.A."/>
        </authorList>
    </citation>
    <scope>NUCLEOTIDE SEQUENCE [GENOMIC DNA] OF 272-461</scope>
    <source>
        <strain>White leghorn</strain>
    </source>
</reference>
<evidence type="ECO:0000250" key="1">
    <source>
        <dbReference type="UniProtKB" id="P70312"/>
    </source>
</evidence>
<evidence type="ECO:0000250" key="2">
    <source>
        <dbReference type="UniProtKB" id="Q92819"/>
    </source>
</evidence>
<evidence type="ECO:0000255" key="3"/>
<evidence type="ECO:0000305" key="4"/>
<name>HYAS2_CHICK</name>
<dbReference type="EC" id="2.4.1.212" evidence="2"/>
<dbReference type="EMBL" id="AF106940">
    <property type="protein sequence ID" value="AAF14347.1"/>
    <property type="molecule type" value="mRNA"/>
</dbReference>
<dbReference type="EMBL" id="AF015776">
    <property type="protein sequence ID" value="AAB94537.1"/>
    <property type="molecule type" value="Genomic_DNA"/>
</dbReference>
<dbReference type="SMR" id="O57424"/>
<dbReference type="FunCoup" id="O57424">
    <property type="interactions" value="23"/>
</dbReference>
<dbReference type="STRING" id="9031.ENSGALP00000045123"/>
<dbReference type="CAZy" id="GT2">
    <property type="family name" value="Glycosyltransferase Family 2"/>
</dbReference>
<dbReference type="PaxDb" id="9031-ENSGALP00000026394"/>
<dbReference type="VEuPathDB" id="HostDB:geneid_395594"/>
<dbReference type="eggNOG" id="KOG2571">
    <property type="taxonomic scope" value="Eukaryota"/>
</dbReference>
<dbReference type="InParanoid" id="O57424"/>
<dbReference type="OrthoDB" id="9876900at2759"/>
<dbReference type="PhylomeDB" id="O57424"/>
<dbReference type="UniPathway" id="UPA00341"/>
<dbReference type="Proteomes" id="UP000000539">
    <property type="component" value="Unassembled WGS sequence"/>
</dbReference>
<dbReference type="GO" id="GO:0005789">
    <property type="term" value="C:endoplasmic reticulum membrane"/>
    <property type="evidence" value="ECO:0007669"/>
    <property type="project" value="UniProtKB-SubCell"/>
</dbReference>
<dbReference type="GO" id="GO:1903561">
    <property type="term" value="C:extracellular vesicle"/>
    <property type="evidence" value="ECO:0000250"/>
    <property type="project" value="UniProtKB"/>
</dbReference>
<dbReference type="GO" id="GO:0005794">
    <property type="term" value="C:Golgi apparatus"/>
    <property type="evidence" value="ECO:0000250"/>
    <property type="project" value="UniProtKB"/>
</dbReference>
<dbReference type="GO" id="GO:0000139">
    <property type="term" value="C:Golgi membrane"/>
    <property type="evidence" value="ECO:0007669"/>
    <property type="project" value="UniProtKB-SubCell"/>
</dbReference>
<dbReference type="GO" id="GO:0005764">
    <property type="term" value="C:lysosome"/>
    <property type="evidence" value="ECO:0007669"/>
    <property type="project" value="UniProtKB-SubCell"/>
</dbReference>
<dbReference type="GO" id="GO:0005886">
    <property type="term" value="C:plasma membrane"/>
    <property type="evidence" value="ECO:0000250"/>
    <property type="project" value="UniProtKB"/>
</dbReference>
<dbReference type="GO" id="GO:0050501">
    <property type="term" value="F:hyaluronan synthase activity"/>
    <property type="evidence" value="ECO:0000250"/>
    <property type="project" value="UniProtKB"/>
</dbReference>
<dbReference type="GO" id="GO:0036302">
    <property type="term" value="P:atrioventricular canal development"/>
    <property type="evidence" value="ECO:0000250"/>
    <property type="project" value="UniProtKB"/>
</dbReference>
<dbReference type="GO" id="GO:0090500">
    <property type="term" value="P:endocardial cushion to mesenchymal transition"/>
    <property type="evidence" value="ECO:0000250"/>
    <property type="project" value="UniProtKB"/>
</dbReference>
<dbReference type="GO" id="GO:0085029">
    <property type="term" value="P:extracellular matrix assembly"/>
    <property type="evidence" value="ECO:0000250"/>
    <property type="project" value="UniProtKB"/>
</dbReference>
<dbReference type="GO" id="GO:0030213">
    <property type="term" value="P:hyaluronan biosynthetic process"/>
    <property type="evidence" value="ECO:0000250"/>
    <property type="project" value="UniProtKB"/>
</dbReference>
<dbReference type="GO" id="GO:0000271">
    <property type="term" value="P:polysaccharide biosynthetic process"/>
    <property type="evidence" value="ECO:0000250"/>
    <property type="project" value="UniProtKB"/>
</dbReference>
<dbReference type="GO" id="GO:0035810">
    <property type="term" value="P:positive regulation of urine volume"/>
    <property type="evidence" value="ECO:0000250"/>
    <property type="project" value="UniProtKB"/>
</dbReference>
<dbReference type="GO" id="GO:0070295">
    <property type="term" value="P:renal water absorption"/>
    <property type="evidence" value="ECO:0000250"/>
    <property type="project" value="UniProtKB"/>
</dbReference>
<dbReference type="GO" id="GO:0001570">
    <property type="term" value="P:vasculogenesis"/>
    <property type="evidence" value="ECO:0000250"/>
    <property type="project" value="UniProtKB"/>
</dbReference>
<dbReference type="CDD" id="cd06434">
    <property type="entry name" value="GT2_HAS"/>
    <property type="match status" value="1"/>
</dbReference>
<dbReference type="Gene3D" id="3.90.550.10">
    <property type="entry name" value="Spore Coat Polysaccharide Biosynthesis Protein SpsA, Chain A"/>
    <property type="match status" value="1"/>
</dbReference>
<dbReference type="InterPro" id="IPR029044">
    <property type="entry name" value="Nucleotide-diphossugar_trans"/>
</dbReference>
<dbReference type="PANTHER" id="PTHR22913">
    <property type="entry name" value="HYALURONAN SYNTHASE"/>
    <property type="match status" value="1"/>
</dbReference>
<dbReference type="PANTHER" id="PTHR22913:SF7">
    <property type="entry name" value="HYALURONAN SYNTHASE 2"/>
    <property type="match status" value="1"/>
</dbReference>
<dbReference type="Pfam" id="PF03142">
    <property type="entry name" value="Chitin_synth_2"/>
    <property type="match status" value="1"/>
</dbReference>
<dbReference type="SUPFAM" id="SSF53448">
    <property type="entry name" value="Nucleotide-diphospho-sugar transferases"/>
    <property type="match status" value="1"/>
</dbReference>
<sequence length="552" mass="63745">MYCERFICILRILGTTLFGVSLLLGITAAYIVGYQFIQTDNYYFSFGLYGAILASHLIIQSLFAYLEHRKMKRSLETPIKLNKTVALCIAAYQEDPDYLRKCLLSVKRLTYPGIKVVMVIDGNSEDDVYMMDIFTEIMGRDKSATYIWSNNFHDKGPGETEESHRESMQHVSQLVLSNKSVCIMQKWGGKREVMYTAFKALGEAWNYVQVCDSDTMLDPASSVEMVKVLEEDPMVGGVGGDVQILNKYDSWISFLSSVRYWMAFNIERACQSYFGCVQCISGPLGMYRNSLLHEFVEDWYNQEFMGSQCSFGDDRHLTNRVLSLGYATKYTARSKCLTETPIEYLRWLNQQTRWSKSYFREWLYNAMWFHKHHLWMTYEAVITGFFPFFLIATVIQLFYRGKIWNILLFLLTVQLVGLIKSSFASFLRGNIVMVFMSLYSVLYMSSLLPAKMFAIATINKAGWGTSGRKTIVVNFIGLIPVSIWFTILLGRVIFTIYKESKKPFSESKTTVLVIGTILYACYWVLLLTLYLVLITKCGRRKKEQHYDMVLDV</sequence>
<keyword id="KW-1003">Cell membrane</keyword>
<keyword id="KW-0256">Endoplasmic reticulum</keyword>
<keyword id="KW-0328">Glycosyltransferase</keyword>
<keyword id="KW-0333">Golgi apparatus</keyword>
<keyword id="KW-0458">Lysosome</keyword>
<keyword id="KW-0472">Membrane</keyword>
<keyword id="KW-1185">Reference proteome</keyword>
<keyword id="KW-0808">Transferase</keyword>
<keyword id="KW-0812">Transmembrane</keyword>
<keyword id="KW-1133">Transmembrane helix</keyword>
<protein>
    <recommendedName>
        <fullName>Hyaluronan synthase 2</fullName>
        <ecNumber evidence="2">2.4.1.212</ecNumber>
    </recommendedName>
    <alternativeName>
        <fullName>Hyaluronate synthase 2</fullName>
    </alternativeName>
    <alternativeName>
        <fullName>Hyaluronic acid synthase 2</fullName>
        <shortName>CHAS2</shortName>
        <shortName>HA synthase 2</shortName>
    </alternativeName>
</protein>
<proteinExistence type="evidence at transcript level"/>
<organism>
    <name type="scientific">Gallus gallus</name>
    <name type="common">Chicken</name>
    <dbReference type="NCBI Taxonomy" id="9031"/>
    <lineage>
        <taxon>Eukaryota</taxon>
        <taxon>Metazoa</taxon>
        <taxon>Chordata</taxon>
        <taxon>Craniata</taxon>
        <taxon>Vertebrata</taxon>
        <taxon>Euteleostomi</taxon>
        <taxon>Archelosauria</taxon>
        <taxon>Archosauria</taxon>
        <taxon>Dinosauria</taxon>
        <taxon>Saurischia</taxon>
        <taxon>Theropoda</taxon>
        <taxon>Coelurosauria</taxon>
        <taxon>Aves</taxon>
        <taxon>Neognathae</taxon>
        <taxon>Galloanserae</taxon>
        <taxon>Galliformes</taxon>
        <taxon>Phasianidae</taxon>
        <taxon>Phasianinae</taxon>
        <taxon>Gallus</taxon>
    </lineage>
</organism>
<gene>
    <name type="primary">HAS2</name>
</gene>